<sequence length="102" mass="11196">MAKGQSLQDPFLNALRRERVPVSIYLVNGIKLQGQIESFDQFVILLKNTVSQMVYKHAISTVVPSRPVSHHSNNASGGTSSNYHHGSSAQNTSAQQDSEETE</sequence>
<name>HFQ_SHIB3</name>
<reference key="1">
    <citation type="submission" date="2008-05" db="EMBL/GenBank/DDBJ databases">
        <title>Complete sequence of Shigella boydii serotype 18 strain BS512.</title>
        <authorList>
            <person name="Rasko D.A."/>
            <person name="Rosovitz M."/>
            <person name="Maurelli A.T."/>
            <person name="Myers G."/>
            <person name="Seshadri R."/>
            <person name="Cer R."/>
            <person name="Jiang L."/>
            <person name="Ravel J."/>
            <person name="Sebastian Y."/>
        </authorList>
    </citation>
    <scope>NUCLEOTIDE SEQUENCE [LARGE SCALE GENOMIC DNA]</scope>
    <source>
        <strain>CDC 3083-94 / BS512</strain>
    </source>
</reference>
<dbReference type="EMBL" id="CP001063">
    <property type="protein sequence ID" value="ACD08972.1"/>
    <property type="molecule type" value="Genomic_DNA"/>
</dbReference>
<dbReference type="RefSeq" id="WP_001051888.1">
    <property type="nucleotide sequence ID" value="NC_010658.1"/>
</dbReference>
<dbReference type="SMR" id="B2TY47"/>
<dbReference type="STRING" id="344609.SbBS512_E4703"/>
<dbReference type="KEGG" id="sbc:SbBS512_E4703"/>
<dbReference type="HOGENOM" id="CLU_113688_2_1_6"/>
<dbReference type="Proteomes" id="UP000001030">
    <property type="component" value="Chromosome"/>
</dbReference>
<dbReference type="GO" id="GO:0005829">
    <property type="term" value="C:cytosol"/>
    <property type="evidence" value="ECO:0007669"/>
    <property type="project" value="TreeGrafter"/>
</dbReference>
<dbReference type="GO" id="GO:0003723">
    <property type="term" value="F:RNA binding"/>
    <property type="evidence" value="ECO:0007669"/>
    <property type="project" value="UniProtKB-UniRule"/>
</dbReference>
<dbReference type="GO" id="GO:0006355">
    <property type="term" value="P:regulation of DNA-templated transcription"/>
    <property type="evidence" value="ECO:0007669"/>
    <property type="project" value="InterPro"/>
</dbReference>
<dbReference type="GO" id="GO:0043487">
    <property type="term" value="P:regulation of RNA stability"/>
    <property type="evidence" value="ECO:0007669"/>
    <property type="project" value="TreeGrafter"/>
</dbReference>
<dbReference type="GO" id="GO:0045974">
    <property type="term" value="P:regulation of translation, ncRNA-mediated"/>
    <property type="evidence" value="ECO:0007669"/>
    <property type="project" value="TreeGrafter"/>
</dbReference>
<dbReference type="CDD" id="cd01716">
    <property type="entry name" value="Hfq"/>
    <property type="match status" value="1"/>
</dbReference>
<dbReference type="FunFam" id="2.30.30.100:FF:000001">
    <property type="entry name" value="RNA-binding protein Hfq"/>
    <property type="match status" value="1"/>
</dbReference>
<dbReference type="Gene3D" id="2.30.30.100">
    <property type="match status" value="1"/>
</dbReference>
<dbReference type="HAMAP" id="MF_00436">
    <property type="entry name" value="Hfq"/>
    <property type="match status" value="1"/>
</dbReference>
<dbReference type="InterPro" id="IPR005001">
    <property type="entry name" value="Hfq"/>
</dbReference>
<dbReference type="InterPro" id="IPR010920">
    <property type="entry name" value="LSM_dom_sf"/>
</dbReference>
<dbReference type="InterPro" id="IPR047575">
    <property type="entry name" value="Sm"/>
</dbReference>
<dbReference type="NCBIfam" id="TIGR02383">
    <property type="entry name" value="Hfq"/>
    <property type="match status" value="1"/>
</dbReference>
<dbReference type="NCBIfam" id="NF001602">
    <property type="entry name" value="PRK00395.1"/>
    <property type="match status" value="1"/>
</dbReference>
<dbReference type="PANTHER" id="PTHR34772">
    <property type="entry name" value="RNA-BINDING PROTEIN HFQ"/>
    <property type="match status" value="1"/>
</dbReference>
<dbReference type="PANTHER" id="PTHR34772:SF1">
    <property type="entry name" value="RNA-BINDING PROTEIN HFQ"/>
    <property type="match status" value="1"/>
</dbReference>
<dbReference type="Pfam" id="PF17209">
    <property type="entry name" value="Hfq"/>
    <property type="match status" value="1"/>
</dbReference>
<dbReference type="SUPFAM" id="SSF50182">
    <property type="entry name" value="Sm-like ribonucleoproteins"/>
    <property type="match status" value="1"/>
</dbReference>
<dbReference type="PROSITE" id="PS52002">
    <property type="entry name" value="SM"/>
    <property type="match status" value="1"/>
</dbReference>
<evidence type="ECO:0000255" key="1">
    <source>
        <dbReference type="HAMAP-Rule" id="MF_00436"/>
    </source>
</evidence>
<evidence type="ECO:0000255" key="2">
    <source>
        <dbReference type="PROSITE-ProRule" id="PRU01346"/>
    </source>
</evidence>
<evidence type="ECO:0000256" key="3">
    <source>
        <dbReference type="SAM" id="MobiDB-lite"/>
    </source>
</evidence>
<organism>
    <name type="scientific">Shigella boydii serotype 18 (strain CDC 3083-94 / BS512)</name>
    <dbReference type="NCBI Taxonomy" id="344609"/>
    <lineage>
        <taxon>Bacteria</taxon>
        <taxon>Pseudomonadati</taxon>
        <taxon>Pseudomonadota</taxon>
        <taxon>Gammaproteobacteria</taxon>
        <taxon>Enterobacterales</taxon>
        <taxon>Enterobacteriaceae</taxon>
        <taxon>Shigella</taxon>
    </lineage>
</organism>
<gene>
    <name evidence="1" type="primary">hfq</name>
    <name type="ordered locus">SbBS512_E4703</name>
</gene>
<feature type="chain" id="PRO_1000190361" description="RNA-binding protein Hfq">
    <location>
        <begin position="1"/>
        <end position="102"/>
    </location>
</feature>
<feature type="domain" description="Sm" evidence="2">
    <location>
        <begin position="9"/>
        <end position="68"/>
    </location>
</feature>
<feature type="region of interest" description="Disordered" evidence="3">
    <location>
        <begin position="63"/>
        <end position="102"/>
    </location>
</feature>
<feature type="compositionally biased region" description="Polar residues" evidence="3">
    <location>
        <begin position="70"/>
        <end position="96"/>
    </location>
</feature>
<proteinExistence type="inferred from homology"/>
<keyword id="KW-1185">Reference proteome</keyword>
<keyword id="KW-0694">RNA-binding</keyword>
<keyword id="KW-0346">Stress response</keyword>
<comment type="function">
    <text evidence="1">RNA chaperone that binds small regulatory RNA (sRNAs) and mRNAs to facilitate mRNA translational regulation in response to envelope stress, environmental stress and changes in metabolite concentrations. Also binds with high specificity to tRNAs.</text>
</comment>
<comment type="subunit">
    <text evidence="1">Homohexamer.</text>
</comment>
<comment type="similarity">
    <text evidence="1">Belongs to the Hfq family.</text>
</comment>
<protein>
    <recommendedName>
        <fullName evidence="1">RNA-binding protein Hfq</fullName>
    </recommendedName>
</protein>
<accession>B2TY47</accession>